<keyword id="KW-0378">Hydrolase</keyword>
<keyword id="KW-0479">Metal-binding</keyword>
<keyword id="KW-1185">Reference proteome</keyword>
<keyword id="KW-0862">Zinc</keyword>
<dbReference type="EC" id="3.5.4.41" evidence="1"/>
<dbReference type="EC" id="3.5.4.31" evidence="1"/>
<dbReference type="EC" id="3.5.4.4" evidence="1"/>
<dbReference type="EC" id="3.5.4.28" evidence="1"/>
<dbReference type="EMBL" id="CP000477">
    <property type="protein sequence ID" value="ABK14776.1"/>
    <property type="molecule type" value="Genomic_DNA"/>
</dbReference>
<dbReference type="RefSeq" id="WP_011696170.1">
    <property type="nucleotide sequence ID" value="NC_008553.1"/>
</dbReference>
<dbReference type="SMR" id="A0B7V2"/>
<dbReference type="STRING" id="349307.Mthe_0991"/>
<dbReference type="GeneID" id="4462867"/>
<dbReference type="KEGG" id="mtp:Mthe_0991"/>
<dbReference type="HOGENOM" id="CLU_012358_2_1_2"/>
<dbReference type="OrthoDB" id="372084at2157"/>
<dbReference type="UniPathway" id="UPA00315"/>
<dbReference type="Proteomes" id="UP000000674">
    <property type="component" value="Chromosome"/>
</dbReference>
<dbReference type="GO" id="GO:0090613">
    <property type="term" value="F:5'-deoxyadenosine deaminase activity"/>
    <property type="evidence" value="ECO:0007669"/>
    <property type="project" value="UniProtKB-UniRule"/>
</dbReference>
<dbReference type="GO" id="GO:0090614">
    <property type="term" value="F:5'-methylthioadenosine deaminase activity"/>
    <property type="evidence" value="ECO:0007669"/>
    <property type="project" value="UniProtKB-EC"/>
</dbReference>
<dbReference type="GO" id="GO:0004000">
    <property type="term" value="F:adenosine deaminase activity"/>
    <property type="evidence" value="ECO:0007669"/>
    <property type="project" value="UniProtKB-UniRule"/>
</dbReference>
<dbReference type="GO" id="GO:0046872">
    <property type="term" value="F:metal ion binding"/>
    <property type="evidence" value="ECO:0007669"/>
    <property type="project" value="UniProtKB-KW"/>
</dbReference>
<dbReference type="GO" id="GO:0050270">
    <property type="term" value="F:S-adenosylhomocysteine deaminase activity"/>
    <property type="evidence" value="ECO:0007669"/>
    <property type="project" value="UniProtKB-EC"/>
</dbReference>
<dbReference type="GO" id="GO:0006556">
    <property type="term" value="P:S-adenosylmethionine biosynthetic process"/>
    <property type="evidence" value="ECO:0007669"/>
    <property type="project" value="UniProtKB-UniRule"/>
</dbReference>
<dbReference type="CDD" id="cd01298">
    <property type="entry name" value="ATZ_TRZ_like"/>
    <property type="match status" value="1"/>
</dbReference>
<dbReference type="FunFam" id="3.20.20.140:FF:000014">
    <property type="entry name" value="5-methylthioadenosine/S-adenosylhomocysteine deaminase"/>
    <property type="match status" value="1"/>
</dbReference>
<dbReference type="Gene3D" id="3.20.20.140">
    <property type="entry name" value="Metal-dependent hydrolases"/>
    <property type="match status" value="1"/>
</dbReference>
<dbReference type="Gene3D" id="2.30.40.10">
    <property type="entry name" value="Urease, subunit C, domain 1"/>
    <property type="match status" value="1"/>
</dbReference>
<dbReference type="HAMAP" id="MF_01281">
    <property type="entry name" value="MTA_SAH_deamin"/>
    <property type="match status" value="1"/>
</dbReference>
<dbReference type="InterPro" id="IPR006680">
    <property type="entry name" value="Amidohydro-rel"/>
</dbReference>
<dbReference type="InterPro" id="IPR023512">
    <property type="entry name" value="Deaminase_MtaD/DadD"/>
</dbReference>
<dbReference type="InterPro" id="IPR011059">
    <property type="entry name" value="Metal-dep_hydrolase_composite"/>
</dbReference>
<dbReference type="InterPro" id="IPR032466">
    <property type="entry name" value="Metal_Hydrolase"/>
</dbReference>
<dbReference type="InterPro" id="IPR050287">
    <property type="entry name" value="MTA/SAH_deaminase"/>
</dbReference>
<dbReference type="PANTHER" id="PTHR43794:SF11">
    <property type="entry name" value="AMIDOHYDROLASE-RELATED DOMAIN-CONTAINING PROTEIN"/>
    <property type="match status" value="1"/>
</dbReference>
<dbReference type="PANTHER" id="PTHR43794">
    <property type="entry name" value="AMINOHYDROLASE SSNA-RELATED"/>
    <property type="match status" value="1"/>
</dbReference>
<dbReference type="Pfam" id="PF01979">
    <property type="entry name" value="Amidohydro_1"/>
    <property type="match status" value="1"/>
</dbReference>
<dbReference type="SUPFAM" id="SSF51338">
    <property type="entry name" value="Composite domain of metallo-dependent hydrolases"/>
    <property type="match status" value="1"/>
</dbReference>
<dbReference type="SUPFAM" id="SSF51556">
    <property type="entry name" value="Metallo-dependent hydrolases"/>
    <property type="match status" value="1"/>
</dbReference>
<gene>
    <name evidence="1" type="primary">dadD</name>
    <name type="ordered locus">Mthe_0991</name>
</gene>
<protein>
    <recommendedName>
        <fullName evidence="1">5'-deoxyadenosine deaminase</fullName>
        <shortName evidence="1">5'-dA deaminase</shortName>
        <ecNumber evidence="1">3.5.4.41</ecNumber>
    </recommendedName>
    <alternativeName>
        <fullName evidence="1">5'-methylthioadenosine deaminase</fullName>
        <shortName evidence="1">MTA deaminase</shortName>
        <ecNumber evidence="1">3.5.4.31</ecNumber>
    </alternativeName>
    <alternativeName>
        <fullName evidence="1">Adenosine deaminase</fullName>
        <ecNumber evidence="1">3.5.4.4</ecNumber>
    </alternativeName>
    <alternativeName>
        <fullName evidence="1">S-adenosylhomocysteine deaminase</fullName>
        <shortName evidence="1">SAH deaminase</shortName>
        <ecNumber evidence="1">3.5.4.28</ecNumber>
    </alternativeName>
</protein>
<organism>
    <name type="scientific">Methanothrix thermoacetophila (strain DSM 6194 / JCM 14653 / NBRC 101360 / PT)</name>
    <name type="common">Methanosaeta thermophila</name>
    <dbReference type="NCBI Taxonomy" id="349307"/>
    <lineage>
        <taxon>Archaea</taxon>
        <taxon>Methanobacteriati</taxon>
        <taxon>Methanobacteriota</taxon>
        <taxon>Stenosarchaea group</taxon>
        <taxon>Methanomicrobia</taxon>
        <taxon>Methanotrichales</taxon>
        <taxon>Methanotrichaceae</taxon>
        <taxon>Methanothrix</taxon>
    </lineage>
</organism>
<reference key="1">
    <citation type="submission" date="2006-10" db="EMBL/GenBank/DDBJ databases">
        <title>Complete sequence of Methanosaeta thermophila PT.</title>
        <authorList>
            <consortium name="US DOE Joint Genome Institute"/>
            <person name="Copeland A."/>
            <person name="Lucas S."/>
            <person name="Lapidus A."/>
            <person name="Barry K."/>
            <person name="Detter J.C."/>
            <person name="Glavina del Rio T."/>
            <person name="Hammon N."/>
            <person name="Israni S."/>
            <person name="Pitluck S."/>
            <person name="Chain P."/>
            <person name="Malfatti S."/>
            <person name="Shin M."/>
            <person name="Vergez L."/>
            <person name="Schmutz J."/>
            <person name="Larimer F."/>
            <person name="Land M."/>
            <person name="Hauser L."/>
            <person name="Kyrpides N."/>
            <person name="Kim E."/>
            <person name="Smith K.S."/>
            <person name="Ingram-Smith C."/>
            <person name="Richardson P."/>
        </authorList>
    </citation>
    <scope>NUCLEOTIDE SEQUENCE [LARGE SCALE GENOMIC DNA]</scope>
    <source>
        <strain>DSM 6194 / JCM 14653 / NBRC 101360 / PT</strain>
    </source>
</reference>
<comment type="function">
    <text evidence="1">Catalyzes the deamination of three SAM-derived enzymatic products, namely 5'-deoxyadenosine, S-adenosyl-L-homocysteine, and 5'-methylthioadenosine, to produce the inosine analogs. Can also deaminate adenosine. The preferred substrate for this enzyme is 5'-deoxyadenosine, but all these substrates are efficiently deaminated. Likely functions in a S-adenosyl-L-methionine (SAM) recycling pathway from S-adenosyl-L-homocysteine (SAH) produced from SAM-dependent methylation reactions. May also be involved in the recycling of 5'-deoxyadenosine, whereupon the 5'-deoxyribose moiety of 5'-deoxyinosine is further metabolized to deoxyhexoses used for the biosynthesis of aromatic amino acids in methanogens.</text>
</comment>
<comment type="catalytic activity">
    <reaction evidence="1">
        <text>5'-deoxyadenosine + H2O + H(+) = 5'-deoxyinosine + NH4(+)</text>
        <dbReference type="Rhea" id="RHEA:42892"/>
        <dbReference type="ChEBI" id="CHEBI:15377"/>
        <dbReference type="ChEBI" id="CHEBI:15378"/>
        <dbReference type="ChEBI" id="CHEBI:17319"/>
        <dbReference type="ChEBI" id="CHEBI:28938"/>
        <dbReference type="ChEBI" id="CHEBI:82775"/>
        <dbReference type="EC" id="3.5.4.41"/>
    </reaction>
    <physiologicalReaction direction="left-to-right" evidence="1">
        <dbReference type="Rhea" id="RHEA:42893"/>
    </physiologicalReaction>
</comment>
<comment type="catalytic activity">
    <reaction evidence="1">
        <text>S-adenosyl-L-homocysteine + H2O + H(+) = S-inosyl-L-homocysteine + NH4(+)</text>
        <dbReference type="Rhea" id="RHEA:20716"/>
        <dbReference type="ChEBI" id="CHEBI:15377"/>
        <dbReference type="ChEBI" id="CHEBI:15378"/>
        <dbReference type="ChEBI" id="CHEBI:28938"/>
        <dbReference type="ChEBI" id="CHEBI:57856"/>
        <dbReference type="ChEBI" id="CHEBI:57985"/>
        <dbReference type="EC" id="3.5.4.28"/>
    </reaction>
    <physiologicalReaction direction="left-to-right" evidence="1">
        <dbReference type="Rhea" id="RHEA:20717"/>
    </physiologicalReaction>
</comment>
<comment type="catalytic activity">
    <reaction evidence="1">
        <text>S-methyl-5'-thioadenosine + H2O + H(+) = S-methyl-5'-thioinosine + NH4(+)</text>
        <dbReference type="Rhea" id="RHEA:25025"/>
        <dbReference type="ChEBI" id="CHEBI:15377"/>
        <dbReference type="ChEBI" id="CHEBI:15378"/>
        <dbReference type="ChEBI" id="CHEBI:17509"/>
        <dbReference type="ChEBI" id="CHEBI:28938"/>
        <dbReference type="ChEBI" id="CHEBI:48595"/>
        <dbReference type="EC" id="3.5.4.31"/>
    </reaction>
    <physiologicalReaction direction="left-to-right" evidence="1">
        <dbReference type="Rhea" id="RHEA:25026"/>
    </physiologicalReaction>
</comment>
<comment type="catalytic activity">
    <reaction evidence="1">
        <text>adenosine + H2O + H(+) = inosine + NH4(+)</text>
        <dbReference type="Rhea" id="RHEA:24408"/>
        <dbReference type="ChEBI" id="CHEBI:15377"/>
        <dbReference type="ChEBI" id="CHEBI:15378"/>
        <dbReference type="ChEBI" id="CHEBI:16335"/>
        <dbReference type="ChEBI" id="CHEBI:17596"/>
        <dbReference type="ChEBI" id="CHEBI:28938"/>
        <dbReference type="EC" id="3.5.4.4"/>
    </reaction>
    <physiologicalReaction direction="left-to-right" evidence="1">
        <dbReference type="Rhea" id="RHEA:24409"/>
    </physiologicalReaction>
</comment>
<comment type="cofactor">
    <cofactor evidence="1">
        <name>Zn(2+)</name>
        <dbReference type="ChEBI" id="CHEBI:29105"/>
    </cofactor>
    <text evidence="1">Binds 1 zinc ion per subunit.</text>
</comment>
<comment type="pathway">
    <text evidence="1">Amino-acid biosynthesis; S-adenosyl-L-methionine biosynthesis.</text>
</comment>
<comment type="subunit">
    <text evidence="1">Homotetramer.</text>
</comment>
<comment type="miscellaneous">
    <text evidence="1">SAH is a product of SAM methyltransferases and is known to be a feedback inhibitor of these enzymes. As a result of this inhibition, organisms have evolved efficient enzymes to metabolize SAH via different pathways. The pathway found in methanogens differs from the canonical pathway, it uses the deamination of S-adenosyl-L-homocysteine to form S-inosyl-L-homocysteine for the regeneration of SAM from S-adenosyl-L-homocysteine. 5'-deoxyadenosine is a radical SAM enzyme reaction product which strongly inhibits radical SAM enzymes. A pathway for removing this product must be present in methanogens where the MTA/SAH nucleosidase which normally metabolizes this compound is absent.</text>
</comment>
<comment type="similarity">
    <text evidence="1">Belongs to the metallo-dependent hydrolases superfamily. MTA/SAH deaminase family.</text>
</comment>
<accession>A0B7V2</accession>
<feature type="chain" id="PRO_0000312478" description="5'-deoxyadenosine deaminase">
    <location>
        <begin position="1"/>
        <end position="413"/>
    </location>
</feature>
<feature type="binding site" evidence="1">
    <location>
        <position position="57"/>
    </location>
    <ligand>
        <name>Zn(2+)</name>
        <dbReference type="ChEBI" id="CHEBI:29105"/>
    </ligand>
</feature>
<feature type="binding site" evidence="1">
    <location>
        <position position="59"/>
    </location>
    <ligand>
        <name>Zn(2+)</name>
        <dbReference type="ChEBI" id="CHEBI:29105"/>
    </ligand>
</feature>
<feature type="binding site" evidence="1">
    <location>
        <position position="86"/>
    </location>
    <ligand>
        <name>substrate</name>
    </ligand>
</feature>
<feature type="binding site" evidence="1">
    <location>
        <position position="171"/>
    </location>
    <ligand>
        <name>substrate</name>
    </ligand>
</feature>
<feature type="binding site" evidence="1">
    <location>
        <position position="198"/>
    </location>
    <ligand>
        <name>Zn(2+)</name>
        <dbReference type="ChEBI" id="CHEBI:29105"/>
    </ligand>
</feature>
<feature type="binding site" evidence="1">
    <location>
        <position position="201"/>
    </location>
    <ligand>
        <name>substrate</name>
    </ligand>
</feature>
<feature type="binding site" evidence="1">
    <location>
        <position position="286"/>
    </location>
    <ligand>
        <name>substrate</name>
    </ligand>
</feature>
<feature type="binding site" evidence="1">
    <location>
        <position position="286"/>
    </location>
    <ligand>
        <name>Zn(2+)</name>
        <dbReference type="ChEBI" id="CHEBI:29105"/>
    </ligand>
</feature>
<name>DADD_METTP</name>
<evidence type="ECO:0000255" key="1">
    <source>
        <dbReference type="HAMAP-Rule" id="MF_01281"/>
    </source>
</evidence>
<proteinExistence type="inferred from homology"/>
<sequence>MLIRSASIIRNGSLLKNIDILIEGNRISEVGRDLRPNDDEIIDARNMLAVPGLVNSHTHLAMTLLRGYADDMELIPWLQEKIWPLEARLKPSDVRAGVKLGCLELIRFGVTCYNDMYYFMDETAAATREMGIRGVLSGVLFDMRPEFINDVEPFIKKWRDDDLIKPAVGPHAVYTCSEETLLRAKDIAERYDVKIHIHLSETRDEVDTFVNQRHMSPVEYLENLGFLSERVVAAHCVWLTPRDIRILAERHVNVAHCPISNLKLASGIAPVATLIEHGVNVCLGTDGASSNNNLDIFEEMKVAAVVQKCSVGRSAILPADAVWRMATENAYKAFSLDMGIRRGALADLALINMRRPWFIPVTSMISHLVYSMSGEASYTICNGRVLMRDGVIEGEAKILDEAQRCYERLISEE</sequence>